<organism>
    <name type="scientific">Mycolicibacterium gilvum (strain PYR-GCK)</name>
    <name type="common">Mycobacterium gilvum (strain PYR-GCK)</name>
    <dbReference type="NCBI Taxonomy" id="350054"/>
    <lineage>
        <taxon>Bacteria</taxon>
        <taxon>Bacillati</taxon>
        <taxon>Actinomycetota</taxon>
        <taxon>Actinomycetes</taxon>
        <taxon>Mycobacteriales</taxon>
        <taxon>Mycobacteriaceae</taxon>
        <taxon>Mycolicibacterium</taxon>
    </lineage>
</organism>
<reference key="1">
    <citation type="submission" date="2007-04" db="EMBL/GenBank/DDBJ databases">
        <title>Complete sequence of chromosome of Mycobacterium gilvum PYR-GCK.</title>
        <authorList>
            <consortium name="US DOE Joint Genome Institute"/>
            <person name="Copeland A."/>
            <person name="Lucas S."/>
            <person name="Lapidus A."/>
            <person name="Barry K."/>
            <person name="Detter J.C."/>
            <person name="Glavina del Rio T."/>
            <person name="Hammon N."/>
            <person name="Israni S."/>
            <person name="Dalin E."/>
            <person name="Tice H."/>
            <person name="Pitluck S."/>
            <person name="Chain P."/>
            <person name="Malfatti S."/>
            <person name="Shin M."/>
            <person name="Vergez L."/>
            <person name="Schmutz J."/>
            <person name="Larimer F."/>
            <person name="Land M."/>
            <person name="Hauser L."/>
            <person name="Kyrpides N."/>
            <person name="Mikhailova N."/>
            <person name="Miller C."/>
            <person name="Richardson P."/>
        </authorList>
    </citation>
    <scope>NUCLEOTIDE SEQUENCE [LARGE SCALE GENOMIC DNA]</scope>
    <source>
        <strain>PYR-GCK</strain>
    </source>
</reference>
<proteinExistence type="inferred from homology"/>
<dbReference type="EC" id="3.6.1.23" evidence="2"/>
<dbReference type="EMBL" id="CP000656">
    <property type="protein sequence ID" value="ABP46404.1"/>
    <property type="molecule type" value="Genomic_DNA"/>
</dbReference>
<dbReference type="SMR" id="A4TCR4"/>
<dbReference type="STRING" id="350054.Mflv_3933"/>
<dbReference type="KEGG" id="mgi:Mflv_3933"/>
<dbReference type="eggNOG" id="COG0756">
    <property type="taxonomic scope" value="Bacteria"/>
</dbReference>
<dbReference type="HOGENOM" id="CLU_068508_1_3_11"/>
<dbReference type="OrthoDB" id="9809956at2"/>
<dbReference type="UniPathway" id="UPA00610">
    <property type="reaction ID" value="UER00666"/>
</dbReference>
<dbReference type="GO" id="GO:0004170">
    <property type="term" value="F:dUTP diphosphatase activity"/>
    <property type="evidence" value="ECO:0007669"/>
    <property type="project" value="UniProtKB-UniRule"/>
</dbReference>
<dbReference type="GO" id="GO:0000287">
    <property type="term" value="F:magnesium ion binding"/>
    <property type="evidence" value="ECO:0007669"/>
    <property type="project" value="UniProtKB-UniRule"/>
</dbReference>
<dbReference type="GO" id="GO:0006226">
    <property type="term" value="P:dUMP biosynthetic process"/>
    <property type="evidence" value="ECO:0007669"/>
    <property type="project" value="UniProtKB-UniRule"/>
</dbReference>
<dbReference type="GO" id="GO:0046081">
    <property type="term" value="P:dUTP catabolic process"/>
    <property type="evidence" value="ECO:0007669"/>
    <property type="project" value="InterPro"/>
</dbReference>
<dbReference type="CDD" id="cd07557">
    <property type="entry name" value="trimeric_dUTPase"/>
    <property type="match status" value="1"/>
</dbReference>
<dbReference type="FunFam" id="2.70.40.10:FF:000008">
    <property type="entry name" value="Deoxyuridine 5'-triphosphate nucleotidohydrolase"/>
    <property type="match status" value="1"/>
</dbReference>
<dbReference type="Gene3D" id="2.70.40.10">
    <property type="match status" value="1"/>
</dbReference>
<dbReference type="HAMAP" id="MF_00116">
    <property type="entry name" value="dUTPase_bact"/>
    <property type="match status" value="1"/>
</dbReference>
<dbReference type="InterPro" id="IPR008181">
    <property type="entry name" value="dUTPase"/>
</dbReference>
<dbReference type="InterPro" id="IPR029054">
    <property type="entry name" value="dUTPase-like"/>
</dbReference>
<dbReference type="InterPro" id="IPR036157">
    <property type="entry name" value="dUTPase-like_sf"/>
</dbReference>
<dbReference type="InterPro" id="IPR033704">
    <property type="entry name" value="dUTPase_trimeric"/>
</dbReference>
<dbReference type="NCBIfam" id="TIGR00576">
    <property type="entry name" value="dut"/>
    <property type="match status" value="1"/>
</dbReference>
<dbReference type="NCBIfam" id="NF001862">
    <property type="entry name" value="PRK00601.1"/>
    <property type="match status" value="1"/>
</dbReference>
<dbReference type="PANTHER" id="PTHR11241">
    <property type="entry name" value="DEOXYURIDINE 5'-TRIPHOSPHATE NUCLEOTIDOHYDROLASE"/>
    <property type="match status" value="1"/>
</dbReference>
<dbReference type="PANTHER" id="PTHR11241:SF0">
    <property type="entry name" value="DEOXYURIDINE 5'-TRIPHOSPHATE NUCLEOTIDOHYDROLASE"/>
    <property type="match status" value="1"/>
</dbReference>
<dbReference type="Pfam" id="PF00692">
    <property type="entry name" value="dUTPase"/>
    <property type="match status" value="1"/>
</dbReference>
<dbReference type="SUPFAM" id="SSF51283">
    <property type="entry name" value="dUTPase-like"/>
    <property type="match status" value="1"/>
</dbReference>
<name>DUT_MYCGI</name>
<feature type="chain" id="PRO_1000076061" description="Deoxyuridine 5'-triphosphate nucleotidohydrolase">
    <location>
        <begin position="1"/>
        <end position="154"/>
    </location>
</feature>
<feature type="binding site" evidence="2">
    <location>
        <begin position="64"/>
        <end position="66"/>
    </location>
    <ligand>
        <name>substrate</name>
    </ligand>
</feature>
<feature type="binding site" evidence="2">
    <location>
        <position position="77"/>
    </location>
    <ligand>
        <name>substrate</name>
    </ligand>
</feature>
<feature type="binding site" evidence="2">
    <location>
        <begin position="81"/>
        <end position="83"/>
    </location>
    <ligand>
        <name>substrate</name>
    </ligand>
</feature>
<feature type="binding site" evidence="2">
    <location>
        <position position="91"/>
    </location>
    <ligand>
        <name>substrate</name>
    </ligand>
</feature>
<evidence type="ECO:0000250" key="1"/>
<evidence type="ECO:0000255" key="2">
    <source>
        <dbReference type="HAMAP-Rule" id="MF_00116"/>
    </source>
</evidence>
<accession>A4TCR4</accession>
<sequence>MSTSLAVVRLDPDLPLPSRAHDGDAGVDLYSAQDVELGPGERALVPTGVAVAIPHGMVGLIHPRSGLAARVGLSIVNTPGTVDAGYRGEIKVCLINLDTSTPITIGRGDRIAQLLVQRVELPELVEVTSFDEAGLADTTRGDGGYGSSGGHASL</sequence>
<gene>
    <name evidence="2" type="primary">dut</name>
    <name type="ordered locus">Mflv_3933</name>
</gene>
<keyword id="KW-0378">Hydrolase</keyword>
<keyword id="KW-0460">Magnesium</keyword>
<keyword id="KW-0479">Metal-binding</keyword>
<keyword id="KW-0546">Nucleotide metabolism</keyword>
<protein>
    <recommendedName>
        <fullName evidence="2">Deoxyuridine 5'-triphosphate nucleotidohydrolase</fullName>
        <shortName evidence="2">dUTPase</shortName>
        <ecNumber evidence="2">3.6.1.23</ecNumber>
    </recommendedName>
    <alternativeName>
        <fullName evidence="2">dUTP pyrophosphatase</fullName>
    </alternativeName>
</protein>
<comment type="function">
    <text evidence="2">This enzyme is involved in nucleotide metabolism: it produces dUMP, the immediate precursor of thymidine nucleotides and it decreases the intracellular concentration of dUTP so that uracil cannot be incorporated into DNA.</text>
</comment>
<comment type="catalytic activity">
    <reaction evidence="2">
        <text>dUTP + H2O = dUMP + diphosphate + H(+)</text>
        <dbReference type="Rhea" id="RHEA:10248"/>
        <dbReference type="ChEBI" id="CHEBI:15377"/>
        <dbReference type="ChEBI" id="CHEBI:15378"/>
        <dbReference type="ChEBI" id="CHEBI:33019"/>
        <dbReference type="ChEBI" id="CHEBI:61555"/>
        <dbReference type="ChEBI" id="CHEBI:246422"/>
        <dbReference type="EC" id="3.6.1.23"/>
    </reaction>
</comment>
<comment type="cofactor">
    <cofactor evidence="2">
        <name>Mg(2+)</name>
        <dbReference type="ChEBI" id="CHEBI:18420"/>
    </cofactor>
</comment>
<comment type="pathway">
    <text evidence="2">Pyrimidine metabolism; dUMP biosynthesis; dUMP from dCTP (dUTP route): step 2/2.</text>
</comment>
<comment type="subunit">
    <text evidence="2">Homotrimer.</text>
</comment>
<comment type="miscellaneous">
    <text evidence="1">Each trimer binds three substrate molecules. The ligands are bound between subunits, and for each substrate molecule, residues from adjacent subunits contribute to the binding interactions (By similarity).</text>
</comment>
<comment type="similarity">
    <text evidence="2">Belongs to the dUTPase family.</text>
</comment>